<comment type="function">
    <text evidence="1">Catalyzes the attachment of threonine to tRNA(Thr) in a two-step reaction: L-threonine is first activated by ATP to form Thr-AMP and then transferred to the acceptor end of tRNA(Thr). Also edits incorrectly charged L-seryl-tRNA(Thr).</text>
</comment>
<comment type="catalytic activity">
    <reaction evidence="1">
        <text>tRNA(Thr) + L-threonine + ATP = L-threonyl-tRNA(Thr) + AMP + diphosphate + H(+)</text>
        <dbReference type="Rhea" id="RHEA:24624"/>
        <dbReference type="Rhea" id="RHEA-COMP:9670"/>
        <dbReference type="Rhea" id="RHEA-COMP:9704"/>
        <dbReference type="ChEBI" id="CHEBI:15378"/>
        <dbReference type="ChEBI" id="CHEBI:30616"/>
        <dbReference type="ChEBI" id="CHEBI:33019"/>
        <dbReference type="ChEBI" id="CHEBI:57926"/>
        <dbReference type="ChEBI" id="CHEBI:78442"/>
        <dbReference type="ChEBI" id="CHEBI:78534"/>
        <dbReference type="ChEBI" id="CHEBI:456215"/>
        <dbReference type="EC" id="6.1.1.3"/>
    </reaction>
</comment>
<comment type="cofactor">
    <cofactor evidence="1">
        <name>Zn(2+)</name>
        <dbReference type="ChEBI" id="CHEBI:29105"/>
    </cofactor>
    <text evidence="1">Binds 1 zinc ion per subunit.</text>
</comment>
<comment type="subunit">
    <text evidence="1">Homodimer.</text>
</comment>
<comment type="subcellular location">
    <subcellularLocation>
        <location evidence="1">Cytoplasm</location>
    </subcellularLocation>
</comment>
<comment type="similarity">
    <text evidence="1">Belongs to the class-II aminoacyl-tRNA synthetase family.</text>
</comment>
<reference key="1">
    <citation type="journal article" date="2003" name="Lancet">
        <title>Sequencing and analysis of the genome of the Whipple's disease bacterium Tropheryma whipplei.</title>
        <authorList>
            <person name="Bentley S.D."/>
            <person name="Maiwald M."/>
            <person name="Murphy L.D."/>
            <person name="Pallen M.J."/>
            <person name="Yeats C.A."/>
            <person name="Dover L.G."/>
            <person name="Norbertczak H.T."/>
            <person name="Besra G.S."/>
            <person name="Quail M.A."/>
            <person name="Harris D.E."/>
            <person name="von Herbay A."/>
            <person name="Goble A."/>
            <person name="Rutter S."/>
            <person name="Squares R."/>
            <person name="Squares S."/>
            <person name="Barrell B.G."/>
            <person name="Parkhill J."/>
            <person name="Relman D.A."/>
        </authorList>
    </citation>
    <scope>NUCLEOTIDE SEQUENCE [LARGE SCALE GENOMIC DNA]</scope>
    <source>
        <strain>TW08/27</strain>
    </source>
</reference>
<proteinExistence type="inferred from homology"/>
<protein>
    <recommendedName>
        <fullName evidence="1">Threonine--tRNA ligase</fullName>
        <ecNumber evidence="1">6.1.1.3</ecNumber>
    </recommendedName>
    <alternativeName>
        <fullName evidence="1">Threonyl-tRNA synthetase</fullName>
        <shortName evidence="1">ThrRS</shortName>
    </alternativeName>
</protein>
<name>SYT_TROW8</name>
<evidence type="ECO:0000255" key="1">
    <source>
        <dbReference type="HAMAP-Rule" id="MF_00184"/>
    </source>
</evidence>
<accession>Q83HM3</accession>
<gene>
    <name evidence="1" type="primary">thrS</name>
    <name type="ordered locus">TW508</name>
</gene>
<feature type="chain" id="PRO_0000101079" description="Threonine--tRNA ligase">
    <location>
        <begin position="1"/>
        <end position="640"/>
    </location>
</feature>
<feature type="region of interest" description="Catalytic" evidence="1">
    <location>
        <begin position="224"/>
        <end position="525"/>
    </location>
</feature>
<feature type="binding site" evidence="1">
    <location>
        <position position="323"/>
    </location>
    <ligand>
        <name>Zn(2+)</name>
        <dbReference type="ChEBI" id="CHEBI:29105"/>
    </ligand>
</feature>
<feature type="binding site" evidence="1">
    <location>
        <position position="374"/>
    </location>
    <ligand>
        <name>Zn(2+)</name>
        <dbReference type="ChEBI" id="CHEBI:29105"/>
    </ligand>
</feature>
<feature type="binding site" evidence="1">
    <location>
        <position position="502"/>
    </location>
    <ligand>
        <name>Zn(2+)</name>
        <dbReference type="ChEBI" id="CHEBI:29105"/>
    </ligand>
</feature>
<dbReference type="EC" id="6.1.1.3" evidence="1"/>
<dbReference type="EMBL" id="BX251411">
    <property type="protein sequence ID" value="CAD67175.1"/>
    <property type="molecule type" value="Genomic_DNA"/>
</dbReference>
<dbReference type="RefSeq" id="WP_011096455.1">
    <property type="nucleotide sequence ID" value="NC_004551.1"/>
</dbReference>
<dbReference type="SMR" id="Q83HM3"/>
<dbReference type="GeneID" id="67388287"/>
<dbReference type="KEGG" id="tws:TW508"/>
<dbReference type="HOGENOM" id="CLU_008554_0_1_11"/>
<dbReference type="GO" id="GO:0005737">
    <property type="term" value="C:cytoplasm"/>
    <property type="evidence" value="ECO:0007669"/>
    <property type="project" value="UniProtKB-SubCell"/>
</dbReference>
<dbReference type="GO" id="GO:0005524">
    <property type="term" value="F:ATP binding"/>
    <property type="evidence" value="ECO:0007669"/>
    <property type="project" value="UniProtKB-UniRule"/>
</dbReference>
<dbReference type="GO" id="GO:0046872">
    <property type="term" value="F:metal ion binding"/>
    <property type="evidence" value="ECO:0007669"/>
    <property type="project" value="UniProtKB-KW"/>
</dbReference>
<dbReference type="GO" id="GO:0004829">
    <property type="term" value="F:threonine-tRNA ligase activity"/>
    <property type="evidence" value="ECO:0007669"/>
    <property type="project" value="UniProtKB-UniRule"/>
</dbReference>
<dbReference type="GO" id="GO:0000049">
    <property type="term" value="F:tRNA binding"/>
    <property type="evidence" value="ECO:0007669"/>
    <property type="project" value="UniProtKB-KW"/>
</dbReference>
<dbReference type="GO" id="GO:0006435">
    <property type="term" value="P:threonyl-tRNA aminoacylation"/>
    <property type="evidence" value="ECO:0007669"/>
    <property type="project" value="UniProtKB-UniRule"/>
</dbReference>
<dbReference type="CDD" id="cd00860">
    <property type="entry name" value="ThrRS_anticodon"/>
    <property type="match status" value="1"/>
</dbReference>
<dbReference type="CDD" id="cd00771">
    <property type="entry name" value="ThrRS_core"/>
    <property type="match status" value="1"/>
</dbReference>
<dbReference type="FunFam" id="3.30.930.10:FF:000019">
    <property type="entry name" value="Threonine--tRNA ligase"/>
    <property type="match status" value="1"/>
</dbReference>
<dbReference type="FunFam" id="3.30.980.10:FF:000005">
    <property type="entry name" value="Threonyl-tRNA synthetase, mitochondrial"/>
    <property type="match status" value="1"/>
</dbReference>
<dbReference type="Gene3D" id="3.30.54.20">
    <property type="match status" value="1"/>
</dbReference>
<dbReference type="Gene3D" id="3.40.50.800">
    <property type="entry name" value="Anticodon-binding domain"/>
    <property type="match status" value="1"/>
</dbReference>
<dbReference type="Gene3D" id="3.30.930.10">
    <property type="entry name" value="Bira Bifunctional Protein, Domain 2"/>
    <property type="match status" value="1"/>
</dbReference>
<dbReference type="Gene3D" id="3.30.980.10">
    <property type="entry name" value="Threonyl-trna Synthetase, Chain A, domain 2"/>
    <property type="match status" value="1"/>
</dbReference>
<dbReference type="HAMAP" id="MF_00184">
    <property type="entry name" value="Thr_tRNA_synth"/>
    <property type="match status" value="1"/>
</dbReference>
<dbReference type="InterPro" id="IPR002314">
    <property type="entry name" value="aa-tRNA-synt_IIb"/>
</dbReference>
<dbReference type="InterPro" id="IPR006195">
    <property type="entry name" value="aa-tRNA-synth_II"/>
</dbReference>
<dbReference type="InterPro" id="IPR045864">
    <property type="entry name" value="aa-tRNA-synth_II/BPL/LPL"/>
</dbReference>
<dbReference type="InterPro" id="IPR004154">
    <property type="entry name" value="Anticodon-bd"/>
</dbReference>
<dbReference type="InterPro" id="IPR036621">
    <property type="entry name" value="Anticodon-bd_dom_sf"/>
</dbReference>
<dbReference type="InterPro" id="IPR002320">
    <property type="entry name" value="Thr-tRNA-ligase_IIa"/>
</dbReference>
<dbReference type="InterPro" id="IPR018163">
    <property type="entry name" value="Thr/Ala-tRNA-synth_IIc_edit"/>
</dbReference>
<dbReference type="InterPro" id="IPR047246">
    <property type="entry name" value="ThrRS_anticodon"/>
</dbReference>
<dbReference type="InterPro" id="IPR033728">
    <property type="entry name" value="ThrRS_core"/>
</dbReference>
<dbReference type="InterPro" id="IPR012947">
    <property type="entry name" value="tRNA_SAD"/>
</dbReference>
<dbReference type="NCBIfam" id="TIGR00418">
    <property type="entry name" value="thrS"/>
    <property type="match status" value="1"/>
</dbReference>
<dbReference type="PANTHER" id="PTHR11451:SF44">
    <property type="entry name" value="THREONINE--TRNA LIGASE, CHLOROPLASTIC_MITOCHONDRIAL 2"/>
    <property type="match status" value="1"/>
</dbReference>
<dbReference type="PANTHER" id="PTHR11451">
    <property type="entry name" value="THREONINE-TRNA LIGASE"/>
    <property type="match status" value="1"/>
</dbReference>
<dbReference type="Pfam" id="PF03129">
    <property type="entry name" value="HGTP_anticodon"/>
    <property type="match status" value="1"/>
</dbReference>
<dbReference type="Pfam" id="PF00587">
    <property type="entry name" value="tRNA-synt_2b"/>
    <property type="match status" value="1"/>
</dbReference>
<dbReference type="Pfam" id="PF07973">
    <property type="entry name" value="tRNA_SAD"/>
    <property type="match status" value="1"/>
</dbReference>
<dbReference type="PRINTS" id="PR01047">
    <property type="entry name" value="TRNASYNTHTHR"/>
</dbReference>
<dbReference type="SMART" id="SM00863">
    <property type="entry name" value="tRNA_SAD"/>
    <property type="match status" value="1"/>
</dbReference>
<dbReference type="SUPFAM" id="SSF52954">
    <property type="entry name" value="Class II aaRS ABD-related"/>
    <property type="match status" value="1"/>
</dbReference>
<dbReference type="SUPFAM" id="SSF55681">
    <property type="entry name" value="Class II aaRS and biotin synthetases"/>
    <property type="match status" value="1"/>
</dbReference>
<dbReference type="SUPFAM" id="SSF55186">
    <property type="entry name" value="ThrRS/AlaRS common domain"/>
    <property type="match status" value="1"/>
</dbReference>
<dbReference type="PROSITE" id="PS50862">
    <property type="entry name" value="AA_TRNA_LIGASE_II"/>
    <property type="match status" value="1"/>
</dbReference>
<keyword id="KW-0030">Aminoacyl-tRNA synthetase</keyword>
<keyword id="KW-0067">ATP-binding</keyword>
<keyword id="KW-0963">Cytoplasm</keyword>
<keyword id="KW-0436">Ligase</keyword>
<keyword id="KW-0479">Metal-binding</keyword>
<keyword id="KW-0547">Nucleotide-binding</keyword>
<keyword id="KW-0648">Protein biosynthesis</keyword>
<keyword id="KW-0694">RNA-binding</keyword>
<keyword id="KW-0820">tRNA-binding</keyword>
<keyword id="KW-0862">Zinc</keyword>
<sequence length="640" mass="73145">MDGFEFFSGRSDVVAMICDDRLLDLSESIPSGKVPEPIELDSPRGLDILRHSCAHVLAQAVQSIYGDAKLGIGPFTENGFYYDFSVNEPFSSDSLRVIEDKMREIVHSDQKFVRKVVDRQSAHSQFRDEPFKLEIINATDDTLSIYYNIDADSGSVRWMDFCRGPHLPSTRFIGDAFALTHVSSVYWRGNSDNPQMQRVYGTAWGSAKDLKGYLDRVELAKLVDHRKLGKELDLFSLPDEIGPGLALFHVKGGIIRSEMEQYARLRHLEEGYNFVYSPHITKRDLFERSGHLQWYGQSMFPPMRLDKDSCSQGFDYYLKPMNCPFHSLVFSSQPRSYRQLPLRLAEFGTVYRYEQSGAIHGLARVRGLTQDDAHIYATRESFEDEVSKALQFTISLLGDYGLDQFYIEISTRDASGKFLGSDEDWAYATHILQKVAQDSGLQTRDDPGGAAFYGPKISVQAKDAIGRYWQMSTIQLDFNLPERFGLFYTDRAGERKRPIMVHRALFGSFERFFAVLTEHYAGAFPPWLSPEQVVALPVTSAHIPYLEEFVSRFSSRLIRARVDYMQDRLPKKIRSYVKEKIPFVLVAGDRDLTNRTVAIRFRDGTQISDLPIQKCFDGICASIDRKKQIQTRIDFDSVLE</sequence>
<organism>
    <name type="scientific">Tropheryma whipplei (strain TW08/27)</name>
    <name type="common">Whipple's bacillus</name>
    <dbReference type="NCBI Taxonomy" id="218496"/>
    <lineage>
        <taxon>Bacteria</taxon>
        <taxon>Bacillati</taxon>
        <taxon>Actinomycetota</taxon>
        <taxon>Actinomycetes</taxon>
        <taxon>Micrococcales</taxon>
        <taxon>Tropherymataceae</taxon>
        <taxon>Tropheryma</taxon>
    </lineage>
</organism>